<comment type="function">
    <text>May play a role in late differentiation as well as in starvation response. When overexpressed, suppresses the ability to form normal fruiting bodies and impairs prespore differentiation as well as maturation into spores.</text>
</comment>
<comment type="subcellular location">
    <subcellularLocation>
        <location>Endoplasmic reticulum</location>
    </subcellularLocation>
    <subcellularLocation>
        <location>Golgi apparatus</location>
    </subcellularLocation>
    <text>In prespore cells, preferentially localizes in Golgi vesicles and cisternae. Colocalizes with trap1 in the prespore-specific vacuole.</text>
</comment>
<comment type="induction">
    <text>Expression is greatly reduced following starvation.</text>
</comment>
<comment type="PTM">
    <text evidence="4">Phosphorylated.</text>
</comment>
<comment type="similarity">
    <text evidence="4">Belongs to the heat shock protein 90 family.</text>
</comment>
<proteinExistence type="evidence at transcript level"/>
<evidence type="ECO:0000250" key="1">
    <source>
        <dbReference type="UniProtKB" id="P41148"/>
    </source>
</evidence>
<evidence type="ECO:0000255" key="2"/>
<evidence type="ECO:0000256" key="3">
    <source>
        <dbReference type="SAM" id="MobiDB-lite"/>
    </source>
</evidence>
<evidence type="ECO:0000305" key="4"/>
<reference key="1">
    <citation type="journal article" date="2000" name="Biochem. Biophys. Res. Commun.">
        <title>Involvement of the glucose-regulated protein 94 (Dd-GRP94) in starvation response of Dictyostelium discoideum cells.</title>
        <authorList>
            <person name="Morita T."/>
            <person name="Saitoh K."/>
            <person name="Takagi T."/>
            <person name="Maeda Y."/>
        </authorList>
    </citation>
    <scope>NUCLEOTIDE SEQUENCE [MRNA]</scope>
    <scope>SUBCELLULAR LOCATION</scope>
</reference>
<reference key="2">
    <citation type="journal article" date="2005" name="Nature">
        <title>The genome of the social amoeba Dictyostelium discoideum.</title>
        <authorList>
            <person name="Eichinger L."/>
            <person name="Pachebat J.A."/>
            <person name="Gloeckner G."/>
            <person name="Rajandream M.A."/>
            <person name="Sucgang R."/>
            <person name="Berriman M."/>
            <person name="Song J."/>
            <person name="Olsen R."/>
            <person name="Szafranski K."/>
            <person name="Xu Q."/>
            <person name="Tunggal B."/>
            <person name="Kummerfeld S."/>
            <person name="Madera M."/>
            <person name="Konfortov B.A."/>
            <person name="Rivero F."/>
            <person name="Bankier A.T."/>
            <person name="Lehmann R."/>
            <person name="Hamlin N."/>
            <person name="Davies R."/>
            <person name="Gaudet P."/>
            <person name="Fey P."/>
            <person name="Pilcher K."/>
            <person name="Chen G."/>
            <person name="Saunders D."/>
            <person name="Sodergren E.J."/>
            <person name="Davis P."/>
            <person name="Kerhornou A."/>
            <person name="Nie X."/>
            <person name="Hall N."/>
            <person name="Anjard C."/>
            <person name="Hemphill L."/>
            <person name="Bason N."/>
            <person name="Farbrother P."/>
            <person name="Desany B."/>
            <person name="Just E."/>
            <person name="Morio T."/>
            <person name="Rost R."/>
            <person name="Churcher C.M."/>
            <person name="Cooper J."/>
            <person name="Haydock S."/>
            <person name="van Driessche N."/>
            <person name="Cronin A."/>
            <person name="Goodhead I."/>
            <person name="Muzny D.M."/>
            <person name="Mourier T."/>
            <person name="Pain A."/>
            <person name="Lu M."/>
            <person name="Harper D."/>
            <person name="Lindsay R."/>
            <person name="Hauser H."/>
            <person name="James K.D."/>
            <person name="Quiles M."/>
            <person name="Madan Babu M."/>
            <person name="Saito T."/>
            <person name="Buchrieser C."/>
            <person name="Wardroper A."/>
            <person name="Felder M."/>
            <person name="Thangavelu M."/>
            <person name="Johnson D."/>
            <person name="Knights A."/>
            <person name="Loulseged H."/>
            <person name="Mungall K.L."/>
            <person name="Oliver K."/>
            <person name="Price C."/>
            <person name="Quail M.A."/>
            <person name="Urushihara H."/>
            <person name="Hernandez J."/>
            <person name="Rabbinowitsch E."/>
            <person name="Steffen D."/>
            <person name="Sanders M."/>
            <person name="Ma J."/>
            <person name="Kohara Y."/>
            <person name="Sharp S."/>
            <person name="Simmonds M.N."/>
            <person name="Spiegler S."/>
            <person name="Tivey A."/>
            <person name="Sugano S."/>
            <person name="White B."/>
            <person name="Walker D."/>
            <person name="Woodward J.R."/>
            <person name="Winckler T."/>
            <person name="Tanaka Y."/>
            <person name="Shaulsky G."/>
            <person name="Schleicher M."/>
            <person name="Weinstock G.M."/>
            <person name="Rosenthal A."/>
            <person name="Cox E.C."/>
            <person name="Chisholm R.L."/>
            <person name="Gibbs R.A."/>
            <person name="Loomis W.F."/>
            <person name="Platzer M."/>
            <person name="Kay R.R."/>
            <person name="Williams J.G."/>
            <person name="Dear P.H."/>
            <person name="Noegel A.A."/>
            <person name="Barrell B.G."/>
            <person name="Kuspa A."/>
        </authorList>
    </citation>
    <scope>NUCLEOTIDE SEQUENCE [LARGE SCALE GENOMIC DNA]</scope>
    <source>
        <strain>AX4</strain>
    </source>
</reference>
<reference key="3">
    <citation type="journal article" date="2005" name="Exp. Cell Res.">
        <title>Changes in spatial and temporal localization of Dictyostelium homologues of TRAP1 and GRP94 revealed by immunoelectron microscopy.</title>
        <authorList>
            <person name="Yamaguchi H."/>
            <person name="Morita T."/>
            <person name="Amagai A."/>
            <person name="Maeda Y."/>
        </authorList>
    </citation>
    <scope>SUBCELLULAR LOCATION</scope>
</reference>
<organism>
    <name type="scientific">Dictyostelium discoideum</name>
    <name type="common">Social amoeba</name>
    <dbReference type="NCBI Taxonomy" id="44689"/>
    <lineage>
        <taxon>Eukaryota</taxon>
        <taxon>Amoebozoa</taxon>
        <taxon>Evosea</taxon>
        <taxon>Eumycetozoa</taxon>
        <taxon>Dictyostelia</taxon>
        <taxon>Dictyosteliales</taxon>
        <taxon>Dictyosteliaceae</taxon>
        <taxon>Dictyostelium</taxon>
    </lineage>
</organism>
<dbReference type="EMBL" id="AB040814">
    <property type="protein sequence ID" value="BAA94290.2"/>
    <property type="molecule type" value="mRNA"/>
</dbReference>
<dbReference type="EMBL" id="AAFI02000035">
    <property type="protein sequence ID" value="EAL67255.1"/>
    <property type="molecule type" value="Genomic_DNA"/>
</dbReference>
<dbReference type="PIR" id="JC7352">
    <property type="entry name" value="JC7352"/>
</dbReference>
<dbReference type="RefSeq" id="XP_641313.1">
    <property type="nucleotide sequence ID" value="XM_636221.1"/>
</dbReference>
<dbReference type="SMR" id="Q9NKX1"/>
<dbReference type="FunCoup" id="Q9NKX1">
    <property type="interactions" value="279"/>
</dbReference>
<dbReference type="STRING" id="44689.Q9NKX1"/>
<dbReference type="GlyCosmos" id="Q9NKX1">
    <property type="glycosylation" value="3 sites, No reported glycans"/>
</dbReference>
<dbReference type="GlyGen" id="Q9NKX1">
    <property type="glycosylation" value="3 sites"/>
</dbReference>
<dbReference type="PaxDb" id="44689-DDB0215015"/>
<dbReference type="EnsemblProtists" id="EAL67255">
    <property type="protein sequence ID" value="EAL67255"/>
    <property type="gene ID" value="DDB_G0280057"/>
</dbReference>
<dbReference type="GeneID" id="8622445"/>
<dbReference type="KEGG" id="ddi:DDB_G0280057"/>
<dbReference type="dictyBase" id="DDB_G0280057">
    <property type="gene designation" value="grp94"/>
</dbReference>
<dbReference type="VEuPathDB" id="AmoebaDB:DDB_G0280057"/>
<dbReference type="eggNOG" id="KOG0020">
    <property type="taxonomic scope" value="Eukaryota"/>
</dbReference>
<dbReference type="InParanoid" id="Q9NKX1"/>
<dbReference type="PhylomeDB" id="Q9NKX1"/>
<dbReference type="Reactome" id="R-DDI-6785807">
    <property type="pathway name" value="Interleukin-4 and Interleukin-13 signaling"/>
</dbReference>
<dbReference type="PRO" id="PR:Q9NKX1"/>
<dbReference type="Proteomes" id="UP000002195">
    <property type="component" value="Chromosome 3"/>
</dbReference>
<dbReference type="GO" id="GO:0005783">
    <property type="term" value="C:endoplasmic reticulum"/>
    <property type="evidence" value="ECO:0000318"/>
    <property type="project" value="GO_Central"/>
</dbReference>
<dbReference type="GO" id="GO:0005794">
    <property type="term" value="C:Golgi apparatus"/>
    <property type="evidence" value="ECO:0007669"/>
    <property type="project" value="UniProtKB-SubCell"/>
</dbReference>
<dbReference type="GO" id="GO:0005798">
    <property type="term" value="C:Golgi-associated vesicle"/>
    <property type="evidence" value="ECO:0000314"/>
    <property type="project" value="dictyBase"/>
</dbReference>
<dbReference type="GO" id="GO:0048471">
    <property type="term" value="C:perinuclear region of cytoplasm"/>
    <property type="evidence" value="ECO:0000318"/>
    <property type="project" value="GO_Central"/>
</dbReference>
<dbReference type="GO" id="GO:0005524">
    <property type="term" value="F:ATP binding"/>
    <property type="evidence" value="ECO:0000318"/>
    <property type="project" value="GO_Central"/>
</dbReference>
<dbReference type="GO" id="GO:0016887">
    <property type="term" value="F:ATP hydrolysis activity"/>
    <property type="evidence" value="ECO:0000318"/>
    <property type="project" value="GO_Central"/>
</dbReference>
<dbReference type="GO" id="GO:0140662">
    <property type="term" value="F:ATP-dependent protein folding chaperone"/>
    <property type="evidence" value="ECO:0007669"/>
    <property type="project" value="InterPro"/>
</dbReference>
<dbReference type="GO" id="GO:0051082">
    <property type="term" value="F:unfolded protein binding"/>
    <property type="evidence" value="ECO:0000318"/>
    <property type="project" value="GO_Central"/>
</dbReference>
<dbReference type="GO" id="GO:0036503">
    <property type="term" value="P:ERAD pathway"/>
    <property type="evidence" value="ECO:0000318"/>
    <property type="project" value="GO_Central"/>
</dbReference>
<dbReference type="GO" id="GO:0006457">
    <property type="term" value="P:protein folding"/>
    <property type="evidence" value="ECO:0000318"/>
    <property type="project" value="GO_Central"/>
</dbReference>
<dbReference type="CDD" id="cd16927">
    <property type="entry name" value="HATPase_Hsp90-like"/>
    <property type="match status" value="1"/>
</dbReference>
<dbReference type="FunFam" id="3.40.50.11260:FF:000022">
    <property type="entry name" value="Endoplasmin homolog"/>
    <property type="match status" value="1"/>
</dbReference>
<dbReference type="FunFam" id="1.20.120.790:FF:000014">
    <property type="entry name" value="Heat shock protein"/>
    <property type="match status" value="1"/>
</dbReference>
<dbReference type="FunFam" id="3.30.565.10:FF:000005">
    <property type="entry name" value="Heat shock protein 90"/>
    <property type="match status" value="1"/>
</dbReference>
<dbReference type="Gene3D" id="3.30.230.80">
    <property type="match status" value="1"/>
</dbReference>
<dbReference type="Gene3D" id="3.40.50.11260">
    <property type="match status" value="1"/>
</dbReference>
<dbReference type="Gene3D" id="1.20.120.790">
    <property type="entry name" value="Heat shock protein 90, C-terminal domain"/>
    <property type="match status" value="1"/>
</dbReference>
<dbReference type="Gene3D" id="3.30.565.10">
    <property type="entry name" value="Histidine kinase-like ATPase, C-terminal domain"/>
    <property type="match status" value="1"/>
</dbReference>
<dbReference type="HAMAP" id="MF_00505">
    <property type="entry name" value="HSP90"/>
    <property type="match status" value="1"/>
</dbReference>
<dbReference type="InterPro" id="IPR036890">
    <property type="entry name" value="HATPase_C_sf"/>
</dbReference>
<dbReference type="InterPro" id="IPR037196">
    <property type="entry name" value="HSP90_C"/>
</dbReference>
<dbReference type="InterPro" id="IPR001404">
    <property type="entry name" value="Hsp90_fam"/>
</dbReference>
<dbReference type="InterPro" id="IPR020575">
    <property type="entry name" value="Hsp90_N"/>
</dbReference>
<dbReference type="InterPro" id="IPR020568">
    <property type="entry name" value="Ribosomal_Su5_D2-typ_SF"/>
</dbReference>
<dbReference type="NCBIfam" id="NF003555">
    <property type="entry name" value="PRK05218.1"/>
    <property type="match status" value="1"/>
</dbReference>
<dbReference type="PANTHER" id="PTHR11528">
    <property type="entry name" value="HEAT SHOCK PROTEIN 90 FAMILY MEMBER"/>
    <property type="match status" value="1"/>
</dbReference>
<dbReference type="Pfam" id="PF13589">
    <property type="entry name" value="HATPase_c_3"/>
    <property type="match status" value="1"/>
</dbReference>
<dbReference type="Pfam" id="PF00183">
    <property type="entry name" value="HSP90"/>
    <property type="match status" value="1"/>
</dbReference>
<dbReference type="PIRSF" id="PIRSF002583">
    <property type="entry name" value="Hsp90"/>
    <property type="match status" value="1"/>
</dbReference>
<dbReference type="PRINTS" id="PR00775">
    <property type="entry name" value="HEATSHOCK90"/>
</dbReference>
<dbReference type="SMART" id="SM00387">
    <property type="entry name" value="HATPase_c"/>
    <property type="match status" value="1"/>
</dbReference>
<dbReference type="SUPFAM" id="SSF55874">
    <property type="entry name" value="ATPase domain of HSP90 chaperone/DNA topoisomerase II/histidine kinase"/>
    <property type="match status" value="1"/>
</dbReference>
<dbReference type="SUPFAM" id="SSF110942">
    <property type="entry name" value="HSP90 C-terminal domain"/>
    <property type="match status" value="1"/>
</dbReference>
<dbReference type="SUPFAM" id="SSF54211">
    <property type="entry name" value="Ribosomal protein S5 domain 2-like"/>
    <property type="match status" value="1"/>
</dbReference>
<dbReference type="PROSITE" id="PS00014">
    <property type="entry name" value="ER_TARGET"/>
    <property type="match status" value="1"/>
</dbReference>
<protein>
    <recommendedName>
        <fullName>Endoplasmin homolog</fullName>
    </recommendedName>
    <alternativeName>
        <fullName>92 kDa phosphoprotein</fullName>
    </alternativeName>
    <alternativeName>
        <fullName>Glucose-regulated protein 94 homolog</fullName>
        <shortName>GRP-94 homolog</shortName>
    </alternativeName>
</protein>
<accession>Q9NKX1</accession>
<accession>Q54VP2</accession>
<feature type="signal peptide" evidence="2">
    <location>
        <begin position="1"/>
        <end position="28"/>
    </location>
</feature>
<feature type="chain" id="PRO_0000327690" description="Endoplasmin homolog">
    <location>
        <begin position="29"/>
        <end position="768"/>
    </location>
</feature>
<feature type="region of interest" description="Disordered" evidence="3">
    <location>
        <begin position="266"/>
        <end position="308"/>
    </location>
</feature>
<feature type="region of interest" description="Disordered" evidence="3">
    <location>
        <begin position="733"/>
        <end position="768"/>
    </location>
</feature>
<feature type="short sequence motif" description="Prevents secretion from ER" evidence="2">
    <location>
        <begin position="765"/>
        <end position="768"/>
    </location>
</feature>
<feature type="compositionally biased region" description="Basic and acidic residues" evidence="3">
    <location>
        <begin position="266"/>
        <end position="276"/>
    </location>
</feature>
<feature type="compositionally biased region" description="Acidic residues" evidence="3">
    <location>
        <begin position="288"/>
        <end position="301"/>
    </location>
</feature>
<feature type="compositionally biased region" description="Polar residues" evidence="3">
    <location>
        <begin position="733"/>
        <end position="743"/>
    </location>
</feature>
<feature type="binding site" evidence="1">
    <location>
        <position position="83"/>
    </location>
    <ligand>
        <name>ATP</name>
        <dbReference type="ChEBI" id="CHEBI:30616"/>
    </ligand>
</feature>
<feature type="binding site" evidence="1">
    <location>
        <position position="127"/>
    </location>
    <ligand>
        <name>ATP</name>
        <dbReference type="ChEBI" id="CHEBI:30616"/>
    </ligand>
</feature>
<feature type="binding site" evidence="1">
    <location>
        <position position="140"/>
    </location>
    <ligand>
        <name>ATP</name>
        <dbReference type="ChEBI" id="CHEBI:30616"/>
    </ligand>
</feature>
<feature type="binding site" evidence="1">
    <location>
        <position position="173"/>
    </location>
    <ligand>
        <name>ATP</name>
        <dbReference type="ChEBI" id="CHEBI:30616"/>
    </ligand>
</feature>
<feature type="site" description="Important for ATP hydrolysis" evidence="1">
    <location>
        <position position="426"/>
    </location>
</feature>
<feature type="glycosylation site" description="N-linked (GlcNAc...) asparagine" evidence="2">
    <location>
        <position position="83"/>
    </location>
</feature>
<feature type="glycosylation site" description="N-linked (GlcNAc...) asparagine" evidence="2">
    <location>
        <position position="317"/>
    </location>
</feature>
<feature type="glycosylation site" description="N-linked (GlcNAc...) asparagine" evidence="2">
    <location>
        <position position="423"/>
    </location>
</feature>
<feature type="sequence conflict" description="In Ref. 1; BAA94290." evidence="4" ref="1">
    <original>T</original>
    <variation>I</variation>
    <location>
        <position position="309"/>
    </location>
</feature>
<feature type="sequence conflict" description="In Ref. 2; EAL67255." evidence="4" ref="2">
    <original>LV</original>
    <variation>G</variation>
    <location>
        <begin position="444"/>
        <end position="445"/>
    </location>
</feature>
<name>ENPL_DICDI</name>
<keyword id="KW-0067">ATP-binding</keyword>
<keyword id="KW-0106">Calcium</keyword>
<keyword id="KW-0143">Chaperone</keyword>
<keyword id="KW-0256">Endoplasmic reticulum</keyword>
<keyword id="KW-0325">Glycoprotein</keyword>
<keyword id="KW-0333">Golgi apparatus</keyword>
<keyword id="KW-0547">Nucleotide-binding</keyword>
<keyword id="KW-0597">Phosphoprotein</keyword>
<keyword id="KW-1185">Reference proteome</keyword>
<keyword id="KW-0732">Signal</keyword>
<sequence>MKSITKIFLILGLFAFLLVAFAPSSSVATVNLESDGYTEAEAKLIEEKGEKFTFQTEVNKLMNIIINSLYSKKEIFLRELISNASDALDKIRFLALTNADLLGEGEQSNLDIHIKIDKANNVLHITDRGVGMTKDELVRNLGTIAQSGTKEFIKKVSDSAESSNLIGQFGVGFYSLFLVADSVVVTSKSNDDDQYVWTSDSQSSYTIAKDPKGNTLGRGTRISLHIKDDSKEFLDQEVIKQLVKKYSQFINFPIYLYVSEEVEIPKEEQEDSKPITDDQVEETTTTTEEGEEETTTEEEGQTEEKKTKTVYKWEELNDSKPLWMKAAKDVTKEEYTEFFRSLSKTQDTPITYSHFKTEGDTEFRSILYIPENPPSNMFDLEAAGSGLKLFVRRVFITDNLKELVPNWLRFLVGVIDSDDLPLNVSREMLQQNKILDAIKKKVILVKFISMIKELSEDEDKTKYNEFFKKFGSSMKLGAIEDQANKKRLTKYLLFPSSKEELTTFAGYVERMKEGQDQIYFITGKSKDSVEASPLIEQAIKKGYEVLFLVDPIDEYLVPQLDKFDDKYKFTNLARSGVKFNEDKEEEDQRKQTAEEFKPLLSYLKKTLSDKLEKVVISKVLADSPSILVSNSWGVTANQERIMKAQAHQANAQPQFNSKKIMEINPSHPLIKKLLNRLNEFGEEDETTKVSAHVLYETSALTAGYSIDNPTNFADFIYKLMMINGDSLAQTNFETTKNENSGPSVSFGDDDENQQQDFQQPPQSTHDEL</sequence>
<gene>
    <name type="primary">grp94</name>
    <name type="ORF">DDB_G0280057</name>
</gene>